<evidence type="ECO:0000250" key="1"/>
<evidence type="ECO:0000255" key="2"/>
<evidence type="ECO:0000305" key="3"/>
<accession>Q49421</accession>
<accession>Q49335</accession>
<keyword id="KW-0378">Hydrolase</keyword>
<keyword id="KW-1185">Reference proteome</keyword>
<keyword id="KW-0719">Serine esterase</keyword>
<reference key="1">
    <citation type="journal article" date="1995" name="Science">
        <title>The minimal gene complement of Mycoplasma genitalium.</title>
        <authorList>
            <person name="Fraser C.M."/>
            <person name="Gocayne J.D."/>
            <person name="White O."/>
            <person name="Adams M.D."/>
            <person name="Clayton R.A."/>
            <person name="Fleischmann R.D."/>
            <person name="Bult C.J."/>
            <person name="Kerlavage A.R."/>
            <person name="Sutton G.G."/>
            <person name="Kelley J.M."/>
            <person name="Fritchman J.L."/>
            <person name="Weidman J.F."/>
            <person name="Small K.V."/>
            <person name="Sandusky M."/>
            <person name="Fuhrmann J.L."/>
            <person name="Nguyen D.T."/>
            <person name="Utterback T.R."/>
            <person name="Saudek D.M."/>
            <person name="Phillips C.A."/>
            <person name="Merrick J.M."/>
            <person name="Tomb J.-F."/>
            <person name="Dougherty B.A."/>
            <person name="Bott K.F."/>
            <person name="Hu P.-C."/>
            <person name="Lucier T.S."/>
            <person name="Peterson S.N."/>
            <person name="Smith H.O."/>
            <person name="Hutchison C.A. III"/>
            <person name="Venter J.C."/>
        </authorList>
    </citation>
    <scope>NUCLEOTIDE SEQUENCE [LARGE SCALE GENOMIC DNA]</scope>
    <source>
        <strain>ATCC 33530 / DSM 19775 / NCTC 10195 / G37</strain>
    </source>
</reference>
<reference key="2">
    <citation type="journal article" date="1993" name="J. Bacteriol.">
        <title>A survey of the Mycoplasma genitalium genome by using random sequencing.</title>
        <authorList>
            <person name="Peterson S.N."/>
            <person name="Hu P.-C."/>
            <person name="Bott K.F."/>
            <person name="Hutchison C.A. III"/>
        </authorList>
    </citation>
    <scope>NUCLEOTIDE SEQUENCE [GENOMIC DNA] OF 193-255</scope>
    <source>
        <strain>ATCC 33530 / DSM 19775 / NCTC 10195 / G37</strain>
    </source>
</reference>
<comment type="similarity">
    <text evidence="3">Belongs to the lipase/esterase LIP3/BchO family.</text>
</comment>
<name>ESL3_MYCGE</name>
<sequence length="273" mass="31836">MKRFSDLNQIDISKLEVFFQPAKKTKKQTVVFAHGFSVFHSYFQSFYKTLTDYDYYAPLWPGHNVNGFDYKELSPIHYGELLAAFIENKDLENIVLIGHSMGAAVCSYAMNLLNAKRVEKLILLAPLSYCNLLRYFKIKSSFKKDKAERMANFKAMFQTKFSNLTDENSWENELSKHSKMAKKLSNNILKELPVLNKTYKNLKLPVFLVLAQNDLFMPTKLTLSYFNKYLIKNNNLQSSVILNSEHQMFNSKYESFCKAMDDILNHNKLSKIY</sequence>
<gene>
    <name type="ordered locus">MG344</name>
</gene>
<dbReference type="EC" id="3.1.-.-"/>
<dbReference type="EMBL" id="L43967">
    <property type="protein sequence ID" value="AAC71569.1"/>
    <property type="molecule type" value="Genomic_DNA"/>
</dbReference>
<dbReference type="EMBL" id="U02222">
    <property type="protein sequence ID" value="AAA03376.1"/>
    <property type="molecule type" value="Genomic_DNA"/>
</dbReference>
<dbReference type="PIR" id="A64238">
    <property type="entry name" value="A64238"/>
</dbReference>
<dbReference type="RefSeq" id="WP_009885800.1">
    <property type="nucleotide sequence ID" value="NC_000908.2"/>
</dbReference>
<dbReference type="SMR" id="Q49421"/>
<dbReference type="STRING" id="243273.MG_344"/>
<dbReference type="ESTHER" id="mycge-esl3">
    <property type="family name" value="AlphaBeta_hydrolase"/>
</dbReference>
<dbReference type="GeneID" id="88282521"/>
<dbReference type="KEGG" id="mge:MG_344"/>
<dbReference type="eggNOG" id="COG2267">
    <property type="taxonomic scope" value="Bacteria"/>
</dbReference>
<dbReference type="HOGENOM" id="CLU_020336_41_1_14"/>
<dbReference type="InParanoid" id="Q49421"/>
<dbReference type="OrthoDB" id="403987at2"/>
<dbReference type="BioCyc" id="MGEN243273:G1GJ2-431-MONOMER"/>
<dbReference type="Proteomes" id="UP000000807">
    <property type="component" value="Chromosome"/>
</dbReference>
<dbReference type="GO" id="GO:0052689">
    <property type="term" value="F:carboxylic ester hydrolase activity"/>
    <property type="evidence" value="ECO:0007669"/>
    <property type="project" value="UniProtKB-KW"/>
</dbReference>
<dbReference type="Gene3D" id="3.40.50.1820">
    <property type="entry name" value="alpha/beta hydrolase"/>
    <property type="match status" value="1"/>
</dbReference>
<dbReference type="InterPro" id="IPR000073">
    <property type="entry name" value="AB_hydrolase_1"/>
</dbReference>
<dbReference type="InterPro" id="IPR029058">
    <property type="entry name" value="AB_hydrolase_fold"/>
</dbReference>
<dbReference type="PANTHER" id="PTHR42886:SF29">
    <property type="entry name" value="PUMMELIG, ISOFORM A"/>
    <property type="match status" value="1"/>
</dbReference>
<dbReference type="PANTHER" id="PTHR42886">
    <property type="entry name" value="RE40534P-RELATED"/>
    <property type="match status" value="1"/>
</dbReference>
<dbReference type="Pfam" id="PF12697">
    <property type="entry name" value="Abhydrolase_6"/>
    <property type="match status" value="1"/>
</dbReference>
<dbReference type="SUPFAM" id="SSF53474">
    <property type="entry name" value="alpha/beta-Hydrolases"/>
    <property type="match status" value="1"/>
</dbReference>
<protein>
    <recommendedName>
        <fullName>Putative esterase/lipase 3</fullName>
        <ecNumber>3.1.-.-</ecNumber>
    </recommendedName>
</protein>
<organism>
    <name type="scientific">Mycoplasma genitalium (strain ATCC 33530 / DSM 19775 / NCTC 10195 / G37)</name>
    <name type="common">Mycoplasmoides genitalium</name>
    <dbReference type="NCBI Taxonomy" id="243273"/>
    <lineage>
        <taxon>Bacteria</taxon>
        <taxon>Bacillati</taxon>
        <taxon>Mycoplasmatota</taxon>
        <taxon>Mycoplasmoidales</taxon>
        <taxon>Mycoplasmoidaceae</taxon>
        <taxon>Mycoplasmoides</taxon>
    </lineage>
</organism>
<proteinExistence type="inferred from homology"/>
<feature type="chain" id="PRO_0000207078" description="Putative esterase/lipase 3">
    <location>
        <begin position="1"/>
        <end position="273"/>
    </location>
</feature>
<feature type="active site" evidence="2">
    <location>
        <position position="34"/>
    </location>
</feature>
<feature type="active site" description="Charge relay system" evidence="1">
    <location>
        <position position="100"/>
    </location>
</feature>